<gene>
    <name type="primary">Hs3st1</name>
    <name type="synonym">3ost</name>
    <name type="synonym">3ost1</name>
</gene>
<keyword id="KW-0002">3D-structure</keyword>
<keyword id="KW-0903">Direct protein sequencing</keyword>
<keyword id="KW-1015">Disulfide bond</keyword>
<keyword id="KW-0325">Glycoprotein</keyword>
<keyword id="KW-0333">Golgi apparatus</keyword>
<keyword id="KW-1185">Reference proteome</keyword>
<keyword id="KW-0732">Signal</keyword>
<keyword id="KW-0808">Transferase</keyword>
<dbReference type="EC" id="2.8.2.23" evidence="2"/>
<dbReference type="EMBL" id="AF019385">
    <property type="protein sequence ID" value="AAB84387.1"/>
    <property type="molecule type" value="mRNA"/>
</dbReference>
<dbReference type="EMBL" id="AK087753">
    <property type="protein sequence ID" value="BAC39991.1"/>
    <property type="molecule type" value="mRNA"/>
</dbReference>
<dbReference type="EMBL" id="BC009133">
    <property type="protein sequence ID" value="AAH09133.1"/>
    <property type="molecule type" value="mRNA"/>
</dbReference>
<dbReference type="CCDS" id="CCDS19257.1"/>
<dbReference type="RefSeq" id="NP_001408509.1">
    <property type="nucleotide sequence ID" value="NM_001421580.1"/>
</dbReference>
<dbReference type="RefSeq" id="NP_001408510.1">
    <property type="nucleotide sequence ID" value="NM_001421581.1"/>
</dbReference>
<dbReference type="RefSeq" id="NP_034604.1">
    <property type="nucleotide sequence ID" value="NM_010474.2"/>
</dbReference>
<dbReference type="RefSeq" id="XP_017176175.1">
    <property type="nucleotide sequence ID" value="XM_017320686.1"/>
</dbReference>
<dbReference type="PDB" id="1VKJ">
    <property type="method" value="X-ray"/>
    <property type="resolution" value="2.50 A"/>
    <property type="chains" value="A/B/C=48-311"/>
</dbReference>
<dbReference type="PDB" id="3UAN">
    <property type="method" value="X-ray"/>
    <property type="resolution" value="1.84 A"/>
    <property type="chains" value="A/B=48-311"/>
</dbReference>
<dbReference type="PDBsum" id="1VKJ"/>
<dbReference type="PDBsum" id="3UAN"/>
<dbReference type="SMR" id="O35310"/>
<dbReference type="FunCoup" id="O35310">
    <property type="interactions" value="319"/>
</dbReference>
<dbReference type="STRING" id="10090.ENSMUSP00000113919"/>
<dbReference type="GlyCosmos" id="O35310">
    <property type="glycosylation" value="4 sites, No reported glycans"/>
</dbReference>
<dbReference type="GlyGen" id="O35310">
    <property type="glycosylation" value="4 sites, 2 N-linked glycans (3 sites)"/>
</dbReference>
<dbReference type="PhosphoSitePlus" id="O35310"/>
<dbReference type="PaxDb" id="10090-ENSMUSP00000051055"/>
<dbReference type="ProteomicsDB" id="267061"/>
<dbReference type="Antibodypedia" id="1208">
    <property type="antibodies" value="125 antibodies from 26 providers"/>
</dbReference>
<dbReference type="DNASU" id="15476"/>
<dbReference type="Ensembl" id="ENSMUST00000053116.7">
    <property type="protein sequence ID" value="ENSMUSP00000051055.7"/>
    <property type="gene ID" value="ENSMUSG00000051022.8"/>
</dbReference>
<dbReference type="Ensembl" id="ENSMUST00000117944.2">
    <property type="protein sequence ID" value="ENSMUSP00000113919.2"/>
    <property type="gene ID" value="ENSMUSG00000051022.8"/>
</dbReference>
<dbReference type="GeneID" id="15476"/>
<dbReference type="KEGG" id="mmu:15476"/>
<dbReference type="UCSC" id="uc008xgy.2">
    <property type="organism name" value="mouse"/>
</dbReference>
<dbReference type="AGR" id="MGI:1201606"/>
<dbReference type="CTD" id="9957"/>
<dbReference type="MGI" id="MGI:1201606">
    <property type="gene designation" value="Hs3st1"/>
</dbReference>
<dbReference type="VEuPathDB" id="HostDB:ENSMUSG00000051022"/>
<dbReference type="eggNOG" id="KOG3704">
    <property type="taxonomic scope" value="Eukaryota"/>
</dbReference>
<dbReference type="GeneTree" id="ENSGT00940000160449"/>
<dbReference type="HOGENOM" id="CLU_017703_0_0_1"/>
<dbReference type="InParanoid" id="O35310"/>
<dbReference type="OMA" id="HMQNWLQ"/>
<dbReference type="OrthoDB" id="411451at2759"/>
<dbReference type="PhylomeDB" id="O35310"/>
<dbReference type="TreeFam" id="TF350755"/>
<dbReference type="BRENDA" id="2.8.2.23">
    <property type="organism ID" value="3474"/>
</dbReference>
<dbReference type="Reactome" id="R-MMU-2022928">
    <property type="pathway name" value="HS-GAG biosynthesis"/>
</dbReference>
<dbReference type="BioGRID-ORCS" id="15476">
    <property type="hits" value="0 hits in 79 CRISPR screens"/>
</dbReference>
<dbReference type="ChiTaRS" id="Hs3st1">
    <property type="organism name" value="mouse"/>
</dbReference>
<dbReference type="EvolutionaryTrace" id="O35310"/>
<dbReference type="PRO" id="PR:O35310"/>
<dbReference type="Proteomes" id="UP000000589">
    <property type="component" value="Chromosome 5"/>
</dbReference>
<dbReference type="RNAct" id="O35310">
    <property type="molecule type" value="protein"/>
</dbReference>
<dbReference type="Bgee" id="ENSMUSG00000051022">
    <property type="expression patterns" value="Expressed in ectoplacental cone and 221 other cell types or tissues"/>
</dbReference>
<dbReference type="ExpressionAtlas" id="O35310">
    <property type="expression patterns" value="baseline and differential"/>
</dbReference>
<dbReference type="GO" id="GO:0005794">
    <property type="term" value="C:Golgi apparatus"/>
    <property type="evidence" value="ECO:0000314"/>
    <property type="project" value="MGI"/>
</dbReference>
<dbReference type="GO" id="GO:0005796">
    <property type="term" value="C:Golgi lumen"/>
    <property type="evidence" value="ECO:0007669"/>
    <property type="project" value="UniProtKB-SubCell"/>
</dbReference>
<dbReference type="GO" id="GO:0008467">
    <property type="term" value="F:[heparan sulfate]-glucosamine 3-sulfotransferase activity"/>
    <property type="evidence" value="ECO:0000314"/>
    <property type="project" value="UniProtKB"/>
</dbReference>
<dbReference type="GO" id="GO:0006024">
    <property type="term" value="P:glycosaminoglycan biosynthetic process"/>
    <property type="evidence" value="ECO:0000314"/>
    <property type="project" value="UniProtKB"/>
</dbReference>
<dbReference type="GO" id="GO:0015012">
    <property type="term" value="P:heparan sulfate proteoglycan biosynthetic process"/>
    <property type="evidence" value="ECO:0000314"/>
    <property type="project" value="MGI"/>
</dbReference>
<dbReference type="FunFam" id="3.40.50.300:FF:000674">
    <property type="entry name" value="Sulfotransferase"/>
    <property type="match status" value="1"/>
</dbReference>
<dbReference type="Gene3D" id="3.40.50.300">
    <property type="entry name" value="P-loop containing nucleotide triphosphate hydrolases"/>
    <property type="match status" value="1"/>
</dbReference>
<dbReference type="InterPro" id="IPR037359">
    <property type="entry name" value="NST/OST"/>
</dbReference>
<dbReference type="InterPro" id="IPR027417">
    <property type="entry name" value="P-loop_NTPase"/>
</dbReference>
<dbReference type="InterPro" id="IPR000863">
    <property type="entry name" value="Sulfotransferase_dom"/>
</dbReference>
<dbReference type="PANTHER" id="PTHR10605:SF16">
    <property type="entry name" value="HEPARAN SULFATE GLUCOSAMINE 3-O-SULFOTRANSFERASE 1"/>
    <property type="match status" value="1"/>
</dbReference>
<dbReference type="PANTHER" id="PTHR10605">
    <property type="entry name" value="HEPARAN SULFATE SULFOTRANSFERASE"/>
    <property type="match status" value="1"/>
</dbReference>
<dbReference type="Pfam" id="PF00685">
    <property type="entry name" value="Sulfotransfer_1"/>
    <property type="match status" value="1"/>
</dbReference>
<dbReference type="SUPFAM" id="SSF52540">
    <property type="entry name" value="P-loop containing nucleoside triphosphate hydrolases"/>
    <property type="match status" value="1"/>
</dbReference>
<reference key="1">
    <citation type="journal article" date="1997" name="J. Biol. Chem.">
        <title>Molecular cloning and expression of mouse and human cDNAs encoding heparan sulfate D-glucosaminyl 3-O-sulfotransferase.</title>
        <authorList>
            <person name="Shworak N.W."/>
            <person name="Liu J."/>
            <person name="Fritze L.M.S."/>
            <person name="Schwartz J.J."/>
            <person name="Zhang L."/>
            <person name="Logeart D."/>
            <person name="Rosenberg R.D."/>
        </authorList>
    </citation>
    <scope>NUCLEOTIDE SEQUENCE [MRNA]</scope>
    <scope>PARTIAL PROTEIN SEQUENCE</scope>
    <scope>FUNCTION</scope>
    <source>
        <strain>C3H/An</strain>
    </source>
</reference>
<reference key="2">
    <citation type="journal article" date="2005" name="Science">
        <title>The transcriptional landscape of the mammalian genome.</title>
        <authorList>
            <person name="Carninci P."/>
            <person name="Kasukawa T."/>
            <person name="Katayama S."/>
            <person name="Gough J."/>
            <person name="Frith M.C."/>
            <person name="Maeda N."/>
            <person name="Oyama R."/>
            <person name="Ravasi T."/>
            <person name="Lenhard B."/>
            <person name="Wells C."/>
            <person name="Kodzius R."/>
            <person name="Shimokawa K."/>
            <person name="Bajic V.B."/>
            <person name="Brenner S.E."/>
            <person name="Batalov S."/>
            <person name="Forrest A.R."/>
            <person name="Zavolan M."/>
            <person name="Davis M.J."/>
            <person name="Wilming L.G."/>
            <person name="Aidinis V."/>
            <person name="Allen J.E."/>
            <person name="Ambesi-Impiombato A."/>
            <person name="Apweiler R."/>
            <person name="Aturaliya R.N."/>
            <person name="Bailey T.L."/>
            <person name="Bansal M."/>
            <person name="Baxter L."/>
            <person name="Beisel K.W."/>
            <person name="Bersano T."/>
            <person name="Bono H."/>
            <person name="Chalk A.M."/>
            <person name="Chiu K.P."/>
            <person name="Choudhary V."/>
            <person name="Christoffels A."/>
            <person name="Clutterbuck D.R."/>
            <person name="Crowe M.L."/>
            <person name="Dalla E."/>
            <person name="Dalrymple B.P."/>
            <person name="de Bono B."/>
            <person name="Della Gatta G."/>
            <person name="di Bernardo D."/>
            <person name="Down T."/>
            <person name="Engstrom P."/>
            <person name="Fagiolini M."/>
            <person name="Faulkner G."/>
            <person name="Fletcher C.F."/>
            <person name="Fukushima T."/>
            <person name="Furuno M."/>
            <person name="Futaki S."/>
            <person name="Gariboldi M."/>
            <person name="Georgii-Hemming P."/>
            <person name="Gingeras T.R."/>
            <person name="Gojobori T."/>
            <person name="Green R.E."/>
            <person name="Gustincich S."/>
            <person name="Harbers M."/>
            <person name="Hayashi Y."/>
            <person name="Hensch T.K."/>
            <person name="Hirokawa N."/>
            <person name="Hill D."/>
            <person name="Huminiecki L."/>
            <person name="Iacono M."/>
            <person name="Ikeo K."/>
            <person name="Iwama A."/>
            <person name="Ishikawa T."/>
            <person name="Jakt M."/>
            <person name="Kanapin A."/>
            <person name="Katoh M."/>
            <person name="Kawasawa Y."/>
            <person name="Kelso J."/>
            <person name="Kitamura H."/>
            <person name="Kitano H."/>
            <person name="Kollias G."/>
            <person name="Krishnan S.P."/>
            <person name="Kruger A."/>
            <person name="Kummerfeld S.K."/>
            <person name="Kurochkin I.V."/>
            <person name="Lareau L.F."/>
            <person name="Lazarevic D."/>
            <person name="Lipovich L."/>
            <person name="Liu J."/>
            <person name="Liuni S."/>
            <person name="McWilliam S."/>
            <person name="Madan Babu M."/>
            <person name="Madera M."/>
            <person name="Marchionni L."/>
            <person name="Matsuda H."/>
            <person name="Matsuzawa S."/>
            <person name="Miki H."/>
            <person name="Mignone F."/>
            <person name="Miyake S."/>
            <person name="Morris K."/>
            <person name="Mottagui-Tabar S."/>
            <person name="Mulder N."/>
            <person name="Nakano N."/>
            <person name="Nakauchi H."/>
            <person name="Ng P."/>
            <person name="Nilsson R."/>
            <person name="Nishiguchi S."/>
            <person name="Nishikawa S."/>
            <person name="Nori F."/>
            <person name="Ohara O."/>
            <person name="Okazaki Y."/>
            <person name="Orlando V."/>
            <person name="Pang K.C."/>
            <person name="Pavan W.J."/>
            <person name="Pavesi G."/>
            <person name="Pesole G."/>
            <person name="Petrovsky N."/>
            <person name="Piazza S."/>
            <person name="Reed J."/>
            <person name="Reid J.F."/>
            <person name="Ring B.Z."/>
            <person name="Ringwald M."/>
            <person name="Rost B."/>
            <person name="Ruan Y."/>
            <person name="Salzberg S.L."/>
            <person name="Sandelin A."/>
            <person name="Schneider C."/>
            <person name="Schoenbach C."/>
            <person name="Sekiguchi K."/>
            <person name="Semple C.A."/>
            <person name="Seno S."/>
            <person name="Sessa L."/>
            <person name="Sheng Y."/>
            <person name="Shibata Y."/>
            <person name="Shimada H."/>
            <person name="Shimada K."/>
            <person name="Silva D."/>
            <person name="Sinclair B."/>
            <person name="Sperling S."/>
            <person name="Stupka E."/>
            <person name="Sugiura K."/>
            <person name="Sultana R."/>
            <person name="Takenaka Y."/>
            <person name="Taki K."/>
            <person name="Tammoja K."/>
            <person name="Tan S.L."/>
            <person name="Tang S."/>
            <person name="Taylor M.S."/>
            <person name="Tegner J."/>
            <person name="Teichmann S.A."/>
            <person name="Ueda H.R."/>
            <person name="van Nimwegen E."/>
            <person name="Verardo R."/>
            <person name="Wei C.L."/>
            <person name="Yagi K."/>
            <person name="Yamanishi H."/>
            <person name="Zabarovsky E."/>
            <person name="Zhu S."/>
            <person name="Zimmer A."/>
            <person name="Hide W."/>
            <person name="Bult C."/>
            <person name="Grimmond S.M."/>
            <person name="Teasdale R.D."/>
            <person name="Liu E.T."/>
            <person name="Brusic V."/>
            <person name="Quackenbush J."/>
            <person name="Wahlestedt C."/>
            <person name="Mattick J.S."/>
            <person name="Hume D.A."/>
            <person name="Kai C."/>
            <person name="Sasaki D."/>
            <person name="Tomaru Y."/>
            <person name="Fukuda S."/>
            <person name="Kanamori-Katayama M."/>
            <person name="Suzuki M."/>
            <person name="Aoki J."/>
            <person name="Arakawa T."/>
            <person name="Iida J."/>
            <person name="Imamura K."/>
            <person name="Itoh M."/>
            <person name="Kato T."/>
            <person name="Kawaji H."/>
            <person name="Kawagashira N."/>
            <person name="Kawashima T."/>
            <person name="Kojima M."/>
            <person name="Kondo S."/>
            <person name="Konno H."/>
            <person name="Nakano K."/>
            <person name="Ninomiya N."/>
            <person name="Nishio T."/>
            <person name="Okada M."/>
            <person name="Plessy C."/>
            <person name="Shibata K."/>
            <person name="Shiraki T."/>
            <person name="Suzuki S."/>
            <person name="Tagami M."/>
            <person name="Waki K."/>
            <person name="Watahiki A."/>
            <person name="Okamura-Oho Y."/>
            <person name="Suzuki H."/>
            <person name="Kawai J."/>
            <person name="Hayashizaki Y."/>
        </authorList>
    </citation>
    <scope>NUCLEOTIDE SEQUENCE [LARGE SCALE MRNA]</scope>
    <source>
        <strain>C57BL/6J</strain>
        <tissue>Thymus</tissue>
    </source>
</reference>
<reference key="3">
    <citation type="journal article" date="2004" name="Genome Res.">
        <title>The status, quality, and expansion of the NIH full-length cDNA project: the Mammalian Gene Collection (MGC).</title>
        <authorList>
            <consortium name="The MGC Project Team"/>
        </authorList>
    </citation>
    <scope>NUCLEOTIDE SEQUENCE [LARGE SCALE MRNA]</scope>
    <source>
        <strain>129</strain>
        <tissue>Mammary tumor</tissue>
    </source>
</reference>
<reference key="4">
    <citation type="journal article" date="2000" name="Biochem. Biophys. Res. Commun.">
        <title>Enzymatic modification of heparan sulfate on a biochip promotes its interaction with antithrombin III.</title>
        <authorList>
            <person name="Hernaiz M."/>
            <person name="Liu J."/>
            <person name="Rosenberg R.D."/>
            <person name="Linhardt R.J."/>
        </authorList>
    </citation>
    <scope>CHARACTERIZATION</scope>
</reference>
<reference key="5">
    <citation type="journal article" date="2004" name="J. Biol. Chem.">
        <title>Crystal structure and mutational analysis of heparan sulfate 3-O-sulfotransferase isoform 1.</title>
        <authorList>
            <person name="Edavettal S.C."/>
            <person name="Lee K.A."/>
            <person name="Negishi M."/>
            <person name="Linhardt R.J."/>
            <person name="Liu J."/>
            <person name="Pedersen L.C."/>
        </authorList>
    </citation>
    <scope>X-RAY CRYSTALLOGRAPHY (2.5 ANGSTROMS) OF 74-311 IN COMPLEX WITH PAPS</scope>
    <scope>FUNCTION</scope>
    <scope>CATALYTIC ACTIVITY</scope>
    <scope>DISULFIDE BOND</scope>
    <scope>BINDING SITES</scope>
    <scope>MUTAGENESIS OF ARG-67; LYS-68; ARG-72; GLU-76; GLU-88; ASN-89; GLU-90; HIS-92; ASP-95; TRP-96; GLU-98; LYS-123; LYS-132; GLN-163; ARG-197; HIS-271; SER-273; LYS-274 AND ARG-276</scope>
</reference>
<accession>O35310</accession>
<sequence length="311" mass="35899">MTLLLLGAVLLVAQPQLVHSHPAAPGPGLKQQELLRKVIILPEDTGEGTASNGSTQQLPQTIIIGVRKGGTRALLEMLSLHPDVAAAENEVHFFDWEEHYSQGLGWYLTQMPFSSPHQLTVEKTPAYFTSPKVPERIHSMNPTIRLLLILRDPSERVLSDYTQVLYNHLQKHKPYPPIEDLLMRDGRLNLDYKALNRSLYHAHMLNWLRFFPLGHIHIVDGDRLIRDPFPEIQKVERFLKLSPQINASNFYFNKTKGFYCLRDSGKDRCLHESKGRAHPQVDPKLLDKLHEYFHEPNKKFFKLVGRTFDWH</sequence>
<comment type="function">
    <text evidence="2 3">Sulfotransferase that utilizes 3'-phospho-5'-adenylyl sulfate (PAPS) to catalyze the transfer of a sulfo group to position 3 of glucosamine residues in heparan (PubMed:15060080, PubMed:9346953). Catalyzes the rate limiting step in the biosynthesis of heparan sulfate (HSact) (PubMed:15060080, PubMed:9346953). This modification is a crucial step in the biosynthesis of anticoagulant heparan sulfate as it completes the structure of the antithrombin pentasaccharide binding site (PubMed:15060080, PubMed:9346953).</text>
</comment>
<comment type="catalytic activity">
    <reaction evidence="2">
        <text>alpha-D-glucosaminyl-[heparan sulfate](n) + 3'-phosphoadenylyl sulfate = 3-sulfo-alpha-D-glucosaminyl-[heparan sulfate](n) + adenosine 3',5'-bisphosphate + H(+)</text>
        <dbReference type="Rhea" id="RHEA:15461"/>
        <dbReference type="Rhea" id="RHEA-COMP:9830"/>
        <dbReference type="Rhea" id="RHEA-COMP:9831"/>
        <dbReference type="ChEBI" id="CHEBI:15378"/>
        <dbReference type="ChEBI" id="CHEBI:58339"/>
        <dbReference type="ChEBI" id="CHEBI:58343"/>
        <dbReference type="ChEBI" id="CHEBI:58388"/>
        <dbReference type="ChEBI" id="CHEBI:70975"/>
        <dbReference type="EC" id="2.8.2.23"/>
    </reaction>
</comment>
<comment type="subcellular location">
    <subcellularLocation>
        <location evidence="4">Golgi apparatus lumen</location>
    </subcellularLocation>
</comment>
<comment type="similarity">
    <text evidence="4">Belongs to the sulfotransferase 1 family.</text>
</comment>
<organism>
    <name type="scientific">Mus musculus</name>
    <name type="common">Mouse</name>
    <dbReference type="NCBI Taxonomy" id="10090"/>
    <lineage>
        <taxon>Eukaryota</taxon>
        <taxon>Metazoa</taxon>
        <taxon>Chordata</taxon>
        <taxon>Craniata</taxon>
        <taxon>Vertebrata</taxon>
        <taxon>Euteleostomi</taxon>
        <taxon>Mammalia</taxon>
        <taxon>Eutheria</taxon>
        <taxon>Euarchontoglires</taxon>
        <taxon>Glires</taxon>
        <taxon>Rodentia</taxon>
        <taxon>Myomorpha</taxon>
        <taxon>Muroidea</taxon>
        <taxon>Muridae</taxon>
        <taxon>Murinae</taxon>
        <taxon>Mus</taxon>
        <taxon>Mus</taxon>
    </lineage>
</organism>
<feature type="signal peptide" evidence="3">
    <location>
        <begin position="1"/>
        <end position="20"/>
    </location>
</feature>
<feature type="chain" id="PRO_0000033452" description="Heparan sulfate glucosamine 3-O-sulfotransferase 1">
    <location>
        <begin position="21"/>
        <end position="311"/>
    </location>
</feature>
<feature type="binding site" evidence="2">
    <location>
        <begin position="68"/>
        <end position="72"/>
    </location>
    <ligand>
        <name>3'-phosphoadenylyl sulfate</name>
        <dbReference type="ChEBI" id="CHEBI:58339"/>
    </ligand>
</feature>
<feature type="binding site" evidence="2">
    <location>
        <position position="151"/>
    </location>
    <ligand>
        <name>3'-phosphoadenylyl sulfate</name>
        <dbReference type="ChEBI" id="CHEBI:58339"/>
    </ligand>
</feature>
<feature type="binding site" evidence="2">
    <location>
        <position position="159"/>
    </location>
    <ligand>
        <name>3'-phosphoadenylyl sulfate</name>
        <dbReference type="ChEBI" id="CHEBI:58339"/>
    </ligand>
</feature>
<feature type="binding site" evidence="2">
    <location>
        <position position="259"/>
    </location>
    <ligand>
        <name>3'-phosphoadenylyl sulfate</name>
        <dbReference type="ChEBI" id="CHEBI:58339"/>
    </ligand>
</feature>
<feature type="binding site" evidence="2">
    <location>
        <begin position="274"/>
        <end position="278"/>
    </location>
    <ligand>
        <name>3'-phosphoadenylyl sulfate</name>
        <dbReference type="ChEBI" id="CHEBI:58339"/>
    </ligand>
</feature>
<feature type="glycosylation site" description="N-linked (GlcNAc...) asparagine" evidence="1">
    <location>
        <position position="52"/>
    </location>
</feature>
<feature type="glycosylation site" description="N-linked (GlcNAc...) asparagine" evidence="1">
    <location>
        <position position="196"/>
    </location>
</feature>
<feature type="glycosylation site" description="N-linked (GlcNAc...) asparagine" evidence="1">
    <location>
        <position position="246"/>
    </location>
</feature>
<feature type="glycosylation site" description="N-linked (GlcNAc...) asparagine" evidence="1">
    <location>
        <position position="253"/>
    </location>
</feature>
<feature type="disulfide bond" evidence="2">
    <location>
        <begin position="260"/>
        <end position="269"/>
    </location>
</feature>
<feature type="mutagenesis site" description="Abolishes the enzymatic activity." evidence="2">
    <original>R</original>
    <variation>E</variation>
    <variation>A</variation>
    <location>
        <position position="67"/>
    </location>
</feature>
<feature type="mutagenesis site" description="Abolishes the enzymatic activity." evidence="2">
    <original>K</original>
    <variation>A</variation>
    <location>
        <position position="68"/>
    </location>
</feature>
<feature type="mutagenesis site" description="Abolishes the enzymatic activity." evidence="2">
    <original>R</original>
    <variation>A</variation>
    <variation>E</variation>
    <location>
        <position position="72"/>
    </location>
</feature>
<feature type="mutagenesis site" description="Strongly decreases the enzymatic activity." evidence="2">
    <original>E</original>
    <variation>A</variation>
    <variation>Q</variation>
    <location>
        <position position="76"/>
    </location>
</feature>
<feature type="mutagenesis site" description="Decreases the enzymatic activity." evidence="2">
    <original>E</original>
    <variation>A</variation>
    <location>
        <position position="88"/>
    </location>
</feature>
<feature type="mutagenesis site" description="Decreases the enzymatic activity." evidence="2">
    <original>N</original>
    <variation>A</variation>
    <variation>D</variation>
    <location>
        <position position="89"/>
    </location>
</feature>
<feature type="mutagenesis site" description="Abolishes the enzymatic activity." evidence="2">
    <original>E</original>
    <variation>Q</variation>
    <variation>A</variation>
    <location>
        <position position="90"/>
    </location>
</feature>
<feature type="mutagenesis site" description="Abolishes the enzymatic activity." evidence="2">
    <original>H</original>
    <variation>F</variation>
    <variation>A</variation>
    <location>
        <position position="92"/>
    </location>
</feature>
<feature type="mutagenesis site" description="Abolishes the enzymatic activity." evidence="2">
    <original>D</original>
    <variation>A</variation>
    <variation>N</variation>
    <location>
        <position position="95"/>
    </location>
</feature>
<feature type="mutagenesis site" description="Decreases the enzymatic activity." evidence="2">
    <original>W</original>
    <variation>A</variation>
    <variation>F</variation>
    <location>
        <position position="96"/>
    </location>
</feature>
<feature type="mutagenesis site" description="Decreases the enzymatic activity." evidence="2">
    <original>E</original>
    <variation>A</variation>
    <location>
        <position position="98"/>
    </location>
</feature>
<feature type="mutagenesis site" description="Abolishes the enzymatic activity." evidence="2">
    <original>K</original>
    <variation>A</variation>
    <location>
        <position position="123"/>
    </location>
</feature>
<feature type="mutagenesis site" description="Decreases the enzymatic activity." evidence="2">
    <original>K</original>
    <variation>A</variation>
    <location>
        <position position="132"/>
    </location>
</feature>
<feature type="mutagenesis site" description="Strongly decreases the enzymatic activity." evidence="2">
    <original>Q</original>
    <variation>A</variation>
    <location>
        <position position="163"/>
    </location>
</feature>
<feature type="mutagenesis site" description="Weakly decrease the enzymatic activity." evidence="2">
    <original>R</original>
    <variation>A</variation>
    <location>
        <position position="197"/>
    </location>
</feature>
<feature type="mutagenesis site" description="No effect." evidence="2">
    <original>H</original>
    <variation>A</variation>
    <location>
        <position position="271"/>
    </location>
</feature>
<feature type="mutagenesis site" description="Decreases the enzymatic activity." evidence="2">
    <original>H</original>
    <variation>F</variation>
    <location>
        <position position="271"/>
    </location>
</feature>
<feature type="mutagenesis site" description="Weakly decrease the enzymatic activity." evidence="2">
    <original>S</original>
    <variation>A</variation>
    <location>
        <position position="273"/>
    </location>
</feature>
<feature type="mutagenesis site" description="Strongly decrease the enzymatic activity." evidence="2">
    <original>K</original>
    <variation>A</variation>
    <location>
        <position position="274"/>
    </location>
</feature>
<feature type="mutagenesis site" description="Abolishes the enzymatic activity." evidence="2">
    <original>R</original>
    <variation>A</variation>
    <location>
        <position position="276"/>
    </location>
</feature>
<feature type="strand" evidence="5">
    <location>
        <begin position="60"/>
        <end position="63"/>
    </location>
</feature>
<feature type="helix" evidence="5">
    <location>
        <begin position="71"/>
        <end position="78"/>
    </location>
</feature>
<feature type="strand" evidence="5">
    <location>
        <begin position="84"/>
        <end position="86"/>
    </location>
</feature>
<feature type="turn" evidence="5">
    <location>
        <begin position="93"/>
        <end position="95"/>
    </location>
</feature>
<feature type="helix" evidence="5">
    <location>
        <begin position="97"/>
        <end position="100"/>
    </location>
</feature>
<feature type="helix" evidence="5">
    <location>
        <begin position="104"/>
        <end position="109"/>
    </location>
</feature>
<feature type="strand" evidence="5">
    <location>
        <begin position="119"/>
        <end position="123"/>
    </location>
</feature>
<feature type="helix" evidence="5">
    <location>
        <begin position="125"/>
        <end position="127"/>
    </location>
</feature>
<feature type="helix" evidence="5">
    <location>
        <begin position="133"/>
        <end position="140"/>
    </location>
</feature>
<feature type="strand" evidence="5">
    <location>
        <begin position="145"/>
        <end position="150"/>
    </location>
</feature>
<feature type="helix" evidence="5">
    <location>
        <begin position="153"/>
        <end position="170"/>
    </location>
</feature>
<feature type="helix" evidence="5">
    <location>
        <begin position="178"/>
        <end position="182"/>
    </location>
</feature>
<feature type="helix" evidence="5">
    <location>
        <begin position="193"/>
        <end position="197"/>
    </location>
</feature>
<feature type="helix" evidence="5">
    <location>
        <begin position="200"/>
        <end position="208"/>
    </location>
</feature>
<feature type="helix" evidence="5">
    <location>
        <begin position="213"/>
        <end position="215"/>
    </location>
</feature>
<feature type="strand" evidence="5">
    <location>
        <begin position="216"/>
        <end position="220"/>
    </location>
</feature>
<feature type="helix" evidence="5">
    <location>
        <begin position="221"/>
        <end position="226"/>
    </location>
</feature>
<feature type="helix" evidence="5">
    <location>
        <begin position="228"/>
        <end position="238"/>
    </location>
</feature>
<feature type="helix" evidence="5">
    <location>
        <begin position="247"/>
        <end position="249"/>
    </location>
</feature>
<feature type="strand" evidence="5">
    <location>
        <begin position="250"/>
        <end position="253"/>
    </location>
</feature>
<feature type="turn" evidence="5">
    <location>
        <begin position="254"/>
        <end position="257"/>
    </location>
</feature>
<feature type="strand" evidence="5">
    <location>
        <begin position="258"/>
        <end position="263"/>
    </location>
</feature>
<feature type="strand" evidence="5">
    <location>
        <begin position="266"/>
        <end position="268"/>
    </location>
</feature>
<feature type="helix" evidence="5">
    <location>
        <begin position="283"/>
        <end position="304"/>
    </location>
</feature>
<protein>
    <recommendedName>
        <fullName>Heparan sulfate glucosamine 3-O-sulfotransferase 1</fullName>
        <ecNumber evidence="2">2.8.2.23</ecNumber>
    </recommendedName>
    <alternativeName>
        <fullName>Heparan sulfate D-glucosaminyl 3-O-sulfotransferase 1</fullName>
        <shortName>Heparan sulfate 3-O-sulfotransferase 1</shortName>
    </alternativeName>
</protein>
<name>HS3S1_MOUSE</name>
<evidence type="ECO:0000255" key="1"/>
<evidence type="ECO:0000269" key="2">
    <source>
    </source>
</evidence>
<evidence type="ECO:0000269" key="3">
    <source>
    </source>
</evidence>
<evidence type="ECO:0000305" key="4"/>
<evidence type="ECO:0007829" key="5">
    <source>
        <dbReference type="PDB" id="3UAN"/>
    </source>
</evidence>
<proteinExistence type="evidence at protein level"/>